<evidence type="ECO:0000255" key="1">
    <source>
        <dbReference type="HAMAP-Rule" id="MF_00294"/>
    </source>
</evidence>
<comment type="similarity">
    <text evidence="1">Belongs to the bacterial ribosomal protein bL33 family.</text>
</comment>
<protein>
    <recommendedName>
        <fullName evidence="1">Large ribosomal subunit protein bL33B</fullName>
    </recommendedName>
    <alternativeName>
        <fullName evidence="1">50S ribosomal protein L33 2</fullName>
    </alternativeName>
</protein>
<keyword id="KW-0687">Ribonucleoprotein</keyword>
<keyword id="KW-0689">Ribosomal protein</keyword>
<feature type="chain" id="PRO_0000356734" description="Large ribosomal subunit protein bL33B">
    <location>
        <begin position="1"/>
        <end position="50"/>
    </location>
</feature>
<sequence length="50" mass="5658">MAQKKASLACVECGSRNYSIGVSSTPKPTRLEVNKFCKYCKTYTLHKETR</sequence>
<accession>Q1J4E0</accession>
<dbReference type="EMBL" id="CP000262">
    <property type="protein sequence ID" value="ABF38796.1"/>
    <property type="molecule type" value="Genomic_DNA"/>
</dbReference>
<dbReference type="SMR" id="Q1J4E0"/>
<dbReference type="KEGG" id="spi:MGAS10750_Spy1846"/>
<dbReference type="HOGENOM" id="CLU_190949_0_1_9"/>
<dbReference type="Proteomes" id="UP000002434">
    <property type="component" value="Chromosome"/>
</dbReference>
<dbReference type="GO" id="GO:0005737">
    <property type="term" value="C:cytoplasm"/>
    <property type="evidence" value="ECO:0007669"/>
    <property type="project" value="UniProtKB-ARBA"/>
</dbReference>
<dbReference type="GO" id="GO:1990904">
    <property type="term" value="C:ribonucleoprotein complex"/>
    <property type="evidence" value="ECO:0007669"/>
    <property type="project" value="UniProtKB-KW"/>
</dbReference>
<dbReference type="GO" id="GO:0005840">
    <property type="term" value="C:ribosome"/>
    <property type="evidence" value="ECO:0007669"/>
    <property type="project" value="UniProtKB-KW"/>
</dbReference>
<dbReference type="GO" id="GO:0003735">
    <property type="term" value="F:structural constituent of ribosome"/>
    <property type="evidence" value="ECO:0007669"/>
    <property type="project" value="InterPro"/>
</dbReference>
<dbReference type="GO" id="GO:0006412">
    <property type="term" value="P:translation"/>
    <property type="evidence" value="ECO:0007669"/>
    <property type="project" value="UniProtKB-UniRule"/>
</dbReference>
<dbReference type="Gene3D" id="2.20.28.120">
    <property type="entry name" value="Ribosomal protein L33"/>
    <property type="match status" value="1"/>
</dbReference>
<dbReference type="HAMAP" id="MF_00294">
    <property type="entry name" value="Ribosomal_bL33"/>
    <property type="match status" value="1"/>
</dbReference>
<dbReference type="InterPro" id="IPR001705">
    <property type="entry name" value="Ribosomal_bL33"/>
</dbReference>
<dbReference type="InterPro" id="IPR038584">
    <property type="entry name" value="Ribosomal_bL33_sf"/>
</dbReference>
<dbReference type="InterPro" id="IPR011332">
    <property type="entry name" value="Ribosomal_zn-bd"/>
</dbReference>
<dbReference type="NCBIfam" id="NF001764">
    <property type="entry name" value="PRK00504.1"/>
    <property type="match status" value="1"/>
</dbReference>
<dbReference type="NCBIfam" id="TIGR01023">
    <property type="entry name" value="rpmG_bact"/>
    <property type="match status" value="1"/>
</dbReference>
<dbReference type="Pfam" id="PF00471">
    <property type="entry name" value="Ribosomal_L33"/>
    <property type="match status" value="1"/>
</dbReference>
<dbReference type="SUPFAM" id="SSF57829">
    <property type="entry name" value="Zn-binding ribosomal proteins"/>
    <property type="match status" value="1"/>
</dbReference>
<name>RL332_STRPF</name>
<reference key="1">
    <citation type="journal article" date="2006" name="Proc. Natl. Acad. Sci. U.S.A.">
        <title>Molecular genetic anatomy of inter- and intraserotype variation in the human bacterial pathogen group A Streptococcus.</title>
        <authorList>
            <person name="Beres S.B."/>
            <person name="Richter E.W."/>
            <person name="Nagiec M.J."/>
            <person name="Sumby P."/>
            <person name="Porcella S.F."/>
            <person name="DeLeo F.R."/>
            <person name="Musser J.M."/>
        </authorList>
    </citation>
    <scope>NUCLEOTIDE SEQUENCE [LARGE SCALE GENOMIC DNA]</scope>
    <source>
        <strain>MGAS10750</strain>
    </source>
</reference>
<proteinExistence type="inferred from homology"/>
<organism>
    <name type="scientific">Streptococcus pyogenes serotype M4 (strain MGAS10750)</name>
    <dbReference type="NCBI Taxonomy" id="370554"/>
    <lineage>
        <taxon>Bacteria</taxon>
        <taxon>Bacillati</taxon>
        <taxon>Bacillota</taxon>
        <taxon>Bacilli</taxon>
        <taxon>Lactobacillales</taxon>
        <taxon>Streptococcaceae</taxon>
        <taxon>Streptococcus</taxon>
    </lineage>
</organism>
<gene>
    <name evidence="1" type="primary">rpmG2</name>
    <name type="ordered locus">MGAS10750_Spy1846</name>
</gene>